<gene>
    <name type="primary">HMGB4</name>
</gene>
<dbReference type="EMBL" id="DQ207367">
    <property type="protein sequence ID" value="ABB22048.1"/>
    <property type="molecule type" value="mRNA"/>
</dbReference>
<dbReference type="EMBL" id="AK311985">
    <property type="protein sequence ID" value="BAG34924.1"/>
    <property type="molecule type" value="mRNA"/>
</dbReference>
<dbReference type="EMBL" id="AL121980">
    <property type="status" value="NOT_ANNOTATED_CDS"/>
    <property type="molecule type" value="Genomic_DNA"/>
</dbReference>
<dbReference type="EMBL" id="BC021180">
    <property type="protein sequence ID" value="AAH21180.1"/>
    <property type="molecule type" value="mRNA"/>
</dbReference>
<dbReference type="EMBL" id="CH471059">
    <property type="protein sequence ID" value="EAX07453.1"/>
    <property type="molecule type" value="Genomic_DNA"/>
</dbReference>
<dbReference type="CCDS" id="CCDS30668.1"/>
<dbReference type="RefSeq" id="NP_001366230.1">
    <property type="nucleotide sequence ID" value="NM_001379301.1"/>
</dbReference>
<dbReference type="RefSeq" id="NP_660206.2">
    <property type="nucleotide sequence ID" value="NM_145205.6"/>
</dbReference>
<dbReference type="SMR" id="Q8WW32"/>
<dbReference type="BioGRID" id="126064">
    <property type="interactions" value="5"/>
</dbReference>
<dbReference type="FunCoup" id="Q8WW32">
    <property type="interactions" value="33"/>
</dbReference>
<dbReference type="IntAct" id="Q8WW32">
    <property type="interactions" value="3"/>
</dbReference>
<dbReference type="STRING" id="9606.ENSP00000430919"/>
<dbReference type="iPTMnet" id="Q8WW32"/>
<dbReference type="PhosphoSitePlus" id="Q8WW32"/>
<dbReference type="BioMuta" id="HMGB4"/>
<dbReference type="DMDM" id="387912835"/>
<dbReference type="MassIVE" id="Q8WW32"/>
<dbReference type="PaxDb" id="9606-ENSP00000430919"/>
<dbReference type="PeptideAtlas" id="Q8WW32"/>
<dbReference type="ProteomicsDB" id="74853"/>
<dbReference type="Antibodypedia" id="17205">
    <property type="antibodies" value="253 antibodies from 28 providers"/>
</dbReference>
<dbReference type="DNASU" id="127540"/>
<dbReference type="Ensembl" id="ENST00000519684.5">
    <property type="protein sequence ID" value="ENSP00000429214.1"/>
    <property type="gene ID" value="ENSG00000176256.11"/>
</dbReference>
<dbReference type="Ensembl" id="ENST00000522796.1">
    <property type="protein sequence ID" value="ENSP00000430919.1"/>
    <property type="gene ID" value="ENSG00000176256.11"/>
</dbReference>
<dbReference type="Ensembl" id="ENST00000681531.1">
    <property type="protein sequence ID" value="ENSP00000505691.1"/>
    <property type="gene ID" value="ENSG00000176256.11"/>
</dbReference>
<dbReference type="GeneID" id="127540"/>
<dbReference type="KEGG" id="hsa:127540"/>
<dbReference type="MANE-Select" id="ENST00000681531.1">
    <property type="protein sequence ID" value="ENSP00000505691.1"/>
    <property type="RefSeq nucleotide sequence ID" value="NM_001379301.1"/>
    <property type="RefSeq protein sequence ID" value="NP_001366230.1"/>
</dbReference>
<dbReference type="UCSC" id="uc001bxp.3">
    <property type="organism name" value="human"/>
</dbReference>
<dbReference type="AGR" id="HGNC:24954"/>
<dbReference type="CTD" id="127540"/>
<dbReference type="DisGeNET" id="127540"/>
<dbReference type="GeneCards" id="HMGB4"/>
<dbReference type="HGNC" id="HGNC:24954">
    <property type="gene designation" value="HMGB4"/>
</dbReference>
<dbReference type="HPA" id="ENSG00000176256">
    <property type="expression patterns" value="Tissue enriched (testis)"/>
</dbReference>
<dbReference type="neXtProt" id="NX_Q8WW32"/>
<dbReference type="OpenTargets" id="ENSG00000176256"/>
<dbReference type="VEuPathDB" id="HostDB:ENSG00000176256"/>
<dbReference type="eggNOG" id="KOG0381">
    <property type="taxonomic scope" value="Eukaryota"/>
</dbReference>
<dbReference type="GeneTree" id="ENSGT00940000162735"/>
<dbReference type="HOGENOM" id="CLU_082854_0_4_1"/>
<dbReference type="InParanoid" id="Q8WW32"/>
<dbReference type="OMA" id="MWSAKTD"/>
<dbReference type="OrthoDB" id="1919336at2759"/>
<dbReference type="PAN-GO" id="Q8WW32">
    <property type="GO annotations" value="2 GO annotations based on evolutionary models"/>
</dbReference>
<dbReference type="PhylomeDB" id="Q8WW32"/>
<dbReference type="TreeFam" id="TF105371"/>
<dbReference type="PathwayCommons" id="Q8WW32"/>
<dbReference type="SignaLink" id="Q8WW32"/>
<dbReference type="BioGRID-ORCS" id="127540">
    <property type="hits" value="10 hits in 1146 CRISPR screens"/>
</dbReference>
<dbReference type="CD-CODE" id="91857CE7">
    <property type="entry name" value="Nucleolus"/>
</dbReference>
<dbReference type="GeneWiki" id="HMGB4"/>
<dbReference type="GenomeRNAi" id="127540"/>
<dbReference type="Pharos" id="Q8WW32">
    <property type="development level" value="Tbio"/>
</dbReference>
<dbReference type="PRO" id="PR:Q8WW32"/>
<dbReference type="Proteomes" id="UP000005640">
    <property type="component" value="Chromosome 1"/>
</dbReference>
<dbReference type="RNAct" id="Q8WW32">
    <property type="molecule type" value="protein"/>
</dbReference>
<dbReference type="Bgee" id="ENSG00000176256">
    <property type="expression patterns" value="Expressed in right testis and 107 other cell types or tissues"/>
</dbReference>
<dbReference type="GO" id="GO:0005694">
    <property type="term" value="C:chromosome"/>
    <property type="evidence" value="ECO:0007669"/>
    <property type="project" value="UniProtKB-SubCell"/>
</dbReference>
<dbReference type="GO" id="GO:0005634">
    <property type="term" value="C:nucleus"/>
    <property type="evidence" value="ECO:0007005"/>
    <property type="project" value="UniProtKB"/>
</dbReference>
<dbReference type="GO" id="GO:0008301">
    <property type="term" value="F:DNA binding, bending"/>
    <property type="evidence" value="ECO:0000318"/>
    <property type="project" value="GO_Central"/>
</dbReference>
<dbReference type="GO" id="GO:0006357">
    <property type="term" value="P:regulation of transcription by RNA polymerase II"/>
    <property type="evidence" value="ECO:0000318"/>
    <property type="project" value="GO_Central"/>
</dbReference>
<dbReference type="CDD" id="cd21978">
    <property type="entry name" value="HMG-box_HMGB_rpt1"/>
    <property type="match status" value="1"/>
</dbReference>
<dbReference type="CDD" id="cd21979">
    <property type="entry name" value="HMG-box_HMGB_rpt2"/>
    <property type="match status" value="1"/>
</dbReference>
<dbReference type="FunFam" id="1.10.30.10:FF:000038">
    <property type="entry name" value="High mobility group box 4"/>
    <property type="match status" value="1"/>
</dbReference>
<dbReference type="FunFam" id="1.10.30.10:FF:000046">
    <property type="entry name" value="High mobility group box 4"/>
    <property type="match status" value="1"/>
</dbReference>
<dbReference type="Gene3D" id="1.10.30.10">
    <property type="entry name" value="High mobility group box domain"/>
    <property type="match status" value="2"/>
</dbReference>
<dbReference type="InterPro" id="IPR009071">
    <property type="entry name" value="HMG_box_dom"/>
</dbReference>
<dbReference type="InterPro" id="IPR036910">
    <property type="entry name" value="HMG_box_dom_sf"/>
</dbReference>
<dbReference type="InterPro" id="IPR050342">
    <property type="entry name" value="HMGB"/>
</dbReference>
<dbReference type="PANTHER" id="PTHR48112:SF7">
    <property type="entry name" value="HIGH MOBILITY GROUP PROTEIN B4"/>
    <property type="match status" value="1"/>
</dbReference>
<dbReference type="PANTHER" id="PTHR48112">
    <property type="entry name" value="HIGH MOBILITY GROUP PROTEIN DSP1"/>
    <property type="match status" value="1"/>
</dbReference>
<dbReference type="Pfam" id="PF00505">
    <property type="entry name" value="HMG_box"/>
    <property type="match status" value="1"/>
</dbReference>
<dbReference type="Pfam" id="PF09011">
    <property type="entry name" value="HMG_box_2"/>
    <property type="match status" value="1"/>
</dbReference>
<dbReference type="PRINTS" id="PR00886">
    <property type="entry name" value="HIGHMOBLTY12"/>
</dbReference>
<dbReference type="SMART" id="SM00398">
    <property type="entry name" value="HMG"/>
    <property type="match status" value="2"/>
</dbReference>
<dbReference type="SUPFAM" id="SSF47095">
    <property type="entry name" value="HMG-box"/>
    <property type="match status" value="2"/>
</dbReference>
<dbReference type="PROSITE" id="PS50118">
    <property type="entry name" value="HMG_BOX_2"/>
    <property type="match status" value="2"/>
</dbReference>
<evidence type="ECO:0000250" key="1">
    <source>
        <dbReference type="UniProtKB" id="Q6P8W9"/>
    </source>
</evidence>
<evidence type="ECO:0000255" key="2">
    <source>
        <dbReference type="PROSITE-ProRule" id="PRU00267"/>
    </source>
</evidence>
<evidence type="ECO:0000256" key="3">
    <source>
        <dbReference type="SAM" id="MobiDB-lite"/>
    </source>
</evidence>
<evidence type="ECO:0000269" key="4">
    <source>
    </source>
</evidence>
<evidence type="ECO:0000269" key="5">
    <source ref="1"/>
</evidence>
<evidence type="ECO:0000305" key="6"/>
<keyword id="KW-0158">Chromosome</keyword>
<keyword id="KW-0238">DNA-binding</keyword>
<keyword id="KW-0539">Nucleus</keyword>
<keyword id="KW-1267">Proteomics identification</keyword>
<keyword id="KW-1185">Reference proteome</keyword>
<keyword id="KW-0677">Repeat</keyword>
<sequence>MGKEIQLKPKANVSSYVHFLLNYRNKFKEQQPNTYVGFKEFSRKCSEKWRSISKHEKAKYEALAKLDKARYQEEMMNYVGKRKKRRKRDPQEPRRPPSSFLLFCQDHYAQLKRENPNWSVVQVAKATGKMWSTATDLEKHPYEQRVALLRAKYFEELELYRKQCNARKKYRMSARNRCRGKRVRQS</sequence>
<accession>Q8WW32</accession>
<accession>B2R4X7</accession>
<accession>Q0QWA4</accession>
<reference key="1">
    <citation type="submission" date="2006-07" db="EMBL/GenBank/DDBJ databases">
        <title>Identification of a novel H. sapiens protein with two high-mobility group domains.</title>
        <authorList>
            <person name="Zhou C."/>
            <person name="Xiao X.W."/>
            <person name="Zhou J.L."/>
            <person name="Zhang J."/>
        </authorList>
    </citation>
    <scope>NUCLEOTIDE SEQUENCE [MRNA]</scope>
    <scope>VARIANT ALA-92</scope>
    <source>
        <tissue>Testis</tissue>
    </source>
</reference>
<reference key="2">
    <citation type="journal article" date="2004" name="Nat. Genet.">
        <title>Complete sequencing and characterization of 21,243 full-length human cDNAs.</title>
        <authorList>
            <person name="Ota T."/>
            <person name="Suzuki Y."/>
            <person name="Nishikawa T."/>
            <person name="Otsuki T."/>
            <person name="Sugiyama T."/>
            <person name="Irie R."/>
            <person name="Wakamatsu A."/>
            <person name="Hayashi K."/>
            <person name="Sato H."/>
            <person name="Nagai K."/>
            <person name="Kimura K."/>
            <person name="Makita H."/>
            <person name="Sekine M."/>
            <person name="Obayashi M."/>
            <person name="Nishi T."/>
            <person name="Shibahara T."/>
            <person name="Tanaka T."/>
            <person name="Ishii S."/>
            <person name="Yamamoto J."/>
            <person name="Saito K."/>
            <person name="Kawai Y."/>
            <person name="Isono Y."/>
            <person name="Nakamura Y."/>
            <person name="Nagahari K."/>
            <person name="Murakami K."/>
            <person name="Yasuda T."/>
            <person name="Iwayanagi T."/>
            <person name="Wagatsuma M."/>
            <person name="Shiratori A."/>
            <person name="Sudo H."/>
            <person name="Hosoiri T."/>
            <person name="Kaku Y."/>
            <person name="Kodaira H."/>
            <person name="Kondo H."/>
            <person name="Sugawara M."/>
            <person name="Takahashi M."/>
            <person name="Kanda K."/>
            <person name="Yokoi T."/>
            <person name="Furuya T."/>
            <person name="Kikkawa E."/>
            <person name="Omura Y."/>
            <person name="Abe K."/>
            <person name="Kamihara K."/>
            <person name="Katsuta N."/>
            <person name="Sato K."/>
            <person name="Tanikawa M."/>
            <person name="Yamazaki M."/>
            <person name="Ninomiya K."/>
            <person name="Ishibashi T."/>
            <person name="Yamashita H."/>
            <person name="Murakawa K."/>
            <person name="Fujimori K."/>
            <person name="Tanai H."/>
            <person name="Kimata M."/>
            <person name="Watanabe M."/>
            <person name="Hiraoka S."/>
            <person name="Chiba Y."/>
            <person name="Ishida S."/>
            <person name="Ono Y."/>
            <person name="Takiguchi S."/>
            <person name="Watanabe S."/>
            <person name="Yosida M."/>
            <person name="Hotuta T."/>
            <person name="Kusano J."/>
            <person name="Kanehori K."/>
            <person name="Takahashi-Fujii A."/>
            <person name="Hara H."/>
            <person name="Tanase T.-O."/>
            <person name="Nomura Y."/>
            <person name="Togiya S."/>
            <person name="Komai F."/>
            <person name="Hara R."/>
            <person name="Takeuchi K."/>
            <person name="Arita M."/>
            <person name="Imose N."/>
            <person name="Musashino K."/>
            <person name="Yuuki H."/>
            <person name="Oshima A."/>
            <person name="Sasaki N."/>
            <person name="Aotsuka S."/>
            <person name="Yoshikawa Y."/>
            <person name="Matsunawa H."/>
            <person name="Ichihara T."/>
            <person name="Shiohata N."/>
            <person name="Sano S."/>
            <person name="Moriya S."/>
            <person name="Momiyama H."/>
            <person name="Satoh N."/>
            <person name="Takami S."/>
            <person name="Terashima Y."/>
            <person name="Suzuki O."/>
            <person name="Nakagawa S."/>
            <person name="Senoh A."/>
            <person name="Mizoguchi H."/>
            <person name="Goto Y."/>
            <person name="Shimizu F."/>
            <person name="Wakebe H."/>
            <person name="Hishigaki H."/>
            <person name="Watanabe T."/>
            <person name="Sugiyama A."/>
            <person name="Takemoto M."/>
            <person name="Kawakami B."/>
            <person name="Yamazaki M."/>
            <person name="Watanabe K."/>
            <person name="Kumagai A."/>
            <person name="Itakura S."/>
            <person name="Fukuzumi Y."/>
            <person name="Fujimori Y."/>
            <person name="Komiyama M."/>
            <person name="Tashiro H."/>
            <person name="Tanigami A."/>
            <person name="Fujiwara T."/>
            <person name="Ono T."/>
            <person name="Yamada K."/>
            <person name="Fujii Y."/>
            <person name="Ozaki K."/>
            <person name="Hirao M."/>
            <person name="Ohmori Y."/>
            <person name="Kawabata A."/>
            <person name="Hikiji T."/>
            <person name="Kobatake N."/>
            <person name="Inagaki H."/>
            <person name="Ikema Y."/>
            <person name="Okamoto S."/>
            <person name="Okitani R."/>
            <person name="Kawakami T."/>
            <person name="Noguchi S."/>
            <person name="Itoh T."/>
            <person name="Shigeta K."/>
            <person name="Senba T."/>
            <person name="Matsumura K."/>
            <person name="Nakajima Y."/>
            <person name="Mizuno T."/>
            <person name="Morinaga M."/>
            <person name="Sasaki M."/>
            <person name="Togashi T."/>
            <person name="Oyama M."/>
            <person name="Hata H."/>
            <person name="Watanabe M."/>
            <person name="Komatsu T."/>
            <person name="Mizushima-Sugano J."/>
            <person name="Satoh T."/>
            <person name="Shirai Y."/>
            <person name="Takahashi Y."/>
            <person name="Nakagawa K."/>
            <person name="Okumura K."/>
            <person name="Nagase T."/>
            <person name="Nomura N."/>
            <person name="Kikuchi H."/>
            <person name="Masuho Y."/>
            <person name="Yamashita R."/>
            <person name="Nakai K."/>
            <person name="Yada T."/>
            <person name="Nakamura Y."/>
            <person name="Ohara O."/>
            <person name="Isogai T."/>
            <person name="Sugano S."/>
        </authorList>
    </citation>
    <scope>NUCLEOTIDE SEQUENCE [LARGE SCALE MRNA]</scope>
    <source>
        <tissue>Testis</tissue>
    </source>
</reference>
<reference key="3">
    <citation type="journal article" date="2006" name="Nature">
        <title>The DNA sequence and biological annotation of human chromosome 1.</title>
        <authorList>
            <person name="Gregory S.G."/>
            <person name="Barlow K.F."/>
            <person name="McLay K.E."/>
            <person name="Kaul R."/>
            <person name="Swarbreck D."/>
            <person name="Dunham A."/>
            <person name="Scott C.E."/>
            <person name="Howe K.L."/>
            <person name="Woodfine K."/>
            <person name="Spencer C.C.A."/>
            <person name="Jones M.C."/>
            <person name="Gillson C."/>
            <person name="Searle S."/>
            <person name="Zhou Y."/>
            <person name="Kokocinski F."/>
            <person name="McDonald L."/>
            <person name="Evans R."/>
            <person name="Phillips K."/>
            <person name="Atkinson A."/>
            <person name="Cooper R."/>
            <person name="Jones C."/>
            <person name="Hall R.E."/>
            <person name="Andrews T.D."/>
            <person name="Lloyd C."/>
            <person name="Ainscough R."/>
            <person name="Almeida J.P."/>
            <person name="Ambrose K.D."/>
            <person name="Anderson F."/>
            <person name="Andrew R.W."/>
            <person name="Ashwell R.I.S."/>
            <person name="Aubin K."/>
            <person name="Babbage A.K."/>
            <person name="Bagguley C.L."/>
            <person name="Bailey J."/>
            <person name="Beasley H."/>
            <person name="Bethel G."/>
            <person name="Bird C.P."/>
            <person name="Bray-Allen S."/>
            <person name="Brown J.Y."/>
            <person name="Brown A.J."/>
            <person name="Buckley D."/>
            <person name="Burton J."/>
            <person name="Bye J."/>
            <person name="Carder C."/>
            <person name="Chapman J.C."/>
            <person name="Clark S.Y."/>
            <person name="Clarke G."/>
            <person name="Clee C."/>
            <person name="Cobley V."/>
            <person name="Collier R.E."/>
            <person name="Corby N."/>
            <person name="Coville G.J."/>
            <person name="Davies J."/>
            <person name="Deadman R."/>
            <person name="Dunn M."/>
            <person name="Earthrowl M."/>
            <person name="Ellington A.G."/>
            <person name="Errington H."/>
            <person name="Frankish A."/>
            <person name="Frankland J."/>
            <person name="French L."/>
            <person name="Garner P."/>
            <person name="Garnett J."/>
            <person name="Gay L."/>
            <person name="Ghori M.R.J."/>
            <person name="Gibson R."/>
            <person name="Gilby L.M."/>
            <person name="Gillett W."/>
            <person name="Glithero R.J."/>
            <person name="Grafham D.V."/>
            <person name="Griffiths C."/>
            <person name="Griffiths-Jones S."/>
            <person name="Grocock R."/>
            <person name="Hammond S."/>
            <person name="Harrison E.S.I."/>
            <person name="Hart E."/>
            <person name="Haugen E."/>
            <person name="Heath P.D."/>
            <person name="Holmes S."/>
            <person name="Holt K."/>
            <person name="Howden P.J."/>
            <person name="Hunt A.R."/>
            <person name="Hunt S.E."/>
            <person name="Hunter G."/>
            <person name="Isherwood J."/>
            <person name="James R."/>
            <person name="Johnson C."/>
            <person name="Johnson D."/>
            <person name="Joy A."/>
            <person name="Kay M."/>
            <person name="Kershaw J.K."/>
            <person name="Kibukawa M."/>
            <person name="Kimberley A.M."/>
            <person name="King A."/>
            <person name="Knights A.J."/>
            <person name="Lad H."/>
            <person name="Laird G."/>
            <person name="Lawlor S."/>
            <person name="Leongamornlert D.A."/>
            <person name="Lloyd D.M."/>
            <person name="Loveland J."/>
            <person name="Lovell J."/>
            <person name="Lush M.J."/>
            <person name="Lyne R."/>
            <person name="Martin S."/>
            <person name="Mashreghi-Mohammadi M."/>
            <person name="Matthews L."/>
            <person name="Matthews N.S.W."/>
            <person name="McLaren S."/>
            <person name="Milne S."/>
            <person name="Mistry S."/>
            <person name="Moore M.J.F."/>
            <person name="Nickerson T."/>
            <person name="O'Dell C.N."/>
            <person name="Oliver K."/>
            <person name="Palmeiri A."/>
            <person name="Palmer S.A."/>
            <person name="Parker A."/>
            <person name="Patel D."/>
            <person name="Pearce A.V."/>
            <person name="Peck A.I."/>
            <person name="Pelan S."/>
            <person name="Phelps K."/>
            <person name="Phillimore B.J."/>
            <person name="Plumb R."/>
            <person name="Rajan J."/>
            <person name="Raymond C."/>
            <person name="Rouse G."/>
            <person name="Saenphimmachak C."/>
            <person name="Sehra H.K."/>
            <person name="Sheridan E."/>
            <person name="Shownkeen R."/>
            <person name="Sims S."/>
            <person name="Skuce C.D."/>
            <person name="Smith M."/>
            <person name="Steward C."/>
            <person name="Subramanian S."/>
            <person name="Sycamore N."/>
            <person name="Tracey A."/>
            <person name="Tromans A."/>
            <person name="Van Helmond Z."/>
            <person name="Wall M."/>
            <person name="Wallis J.M."/>
            <person name="White S."/>
            <person name="Whitehead S.L."/>
            <person name="Wilkinson J.E."/>
            <person name="Willey D.L."/>
            <person name="Williams H."/>
            <person name="Wilming L."/>
            <person name="Wray P.W."/>
            <person name="Wu Z."/>
            <person name="Coulson A."/>
            <person name="Vaudin M."/>
            <person name="Sulston J.E."/>
            <person name="Durbin R.M."/>
            <person name="Hubbard T."/>
            <person name="Wooster R."/>
            <person name="Dunham I."/>
            <person name="Carter N.P."/>
            <person name="McVean G."/>
            <person name="Ross M.T."/>
            <person name="Harrow J."/>
            <person name="Olson M.V."/>
            <person name="Beck S."/>
            <person name="Rogers J."/>
            <person name="Bentley D.R."/>
        </authorList>
    </citation>
    <scope>NUCLEOTIDE SEQUENCE [LARGE SCALE GENOMIC DNA]</scope>
</reference>
<reference key="4">
    <citation type="submission" date="2005-09" db="EMBL/GenBank/DDBJ databases">
        <authorList>
            <person name="Mural R.J."/>
            <person name="Istrail S."/>
            <person name="Sutton G."/>
            <person name="Florea L."/>
            <person name="Halpern A.L."/>
            <person name="Mobarry C.M."/>
            <person name="Lippert R."/>
            <person name="Walenz B."/>
            <person name="Shatkay H."/>
            <person name="Dew I."/>
            <person name="Miller J.R."/>
            <person name="Flanigan M.J."/>
            <person name="Edwards N.J."/>
            <person name="Bolanos R."/>
            <person name="Fasulo D."/>
            <person name="Halldorsson B.V."/>
            <person name="Hannenhalli S."/>
            <person name="Turner R."/>
            <person name="Yooseph S."/>
            <person name="Lu F."/>
            <person name="Nusskern D.R."/>
            <person name="Shue B.C."/>
            <person name="Zheng X.H."/>
            <person name="Zhong F."/>
            <person name="Delcher A.L."/>
            <person name="Huson D.H."/>
            <person name="Kravitz S.A."/>
            <person name="Mouchard L."/>
            <person name="Reinert K."/>
            <person name="Remington K.A."/>
            <person name="Clark A.G."/>
            <person name="Waterman M.S."/>
            <person name="Eichler E.E."/>
            <person name="Adams M.D."/>
            <person name="Hunkapiller M.W."/>
            <person name="Myers E.W."/>
            <person name="Venter J.C."/>
        </authorList>
    </citation>
    <scope>NUCLEOTIDE SEQUENCE [LARGE SCALE GENOMIC DNA]</scope>
</reference>
<reference key="5">
    <citation type="journal article" date="2004" name="Genome Res.">
        <title>The status, quality, and expansion of the NIH full-length cDNA project: the Mammalian Gene Collection (MGC).</title>
        <authorList>
            <consortium name="The MGC Project Team"/>
        </authorList>
    </citation>
    <scope>NUCLEOTIDE SEQUENCE [LARGE SCALE MRNA]</scope>
    <scope>VARIANT ALA-92</scope>
    <source>
        <tissue>Testis</tissue>
    </source>
</reference>
<protein>
    <recommendedName>
        <fullName>High mobility group protein B4</fullName>
    </recommendedName>
</protein>
<name>HMGB4_HUMAN</name>
<feature type="chain" id="PRO_0000269180" description="High mobility group protein B4">
    <location>
        <begin position="1"/>
        <end position="186"/>
    </location>
</feature>
<feature type="DNA-binding region" description="HMG box 1" evidence="2">
    <location>
        <begin position="9"/>
        <end position="79"/>
    </location>
</feature>
<feature type="DNA-binding region" description="HMG box 2" evidence="2">
    <location>
        <begin position="93"/>
        <end position="161"/>
    </location>
</feature>
<feature type="region of interest" description="Disordered" evidence="3">
    <location>
        <begin position="77"/>
        <end position="98"/>
    </location>
</feature>
<feature type="sequence variant" id="VAR_055951" description="In dbSNP:rs11542686.">
    <original>K</original>
    <variation>R</variation>
    <location>
        <position position="59"/>
    </location>
</feature>
<feature type="sequence variant" id="VAR_067467" description="In dbSNP:rs10379." evidence="4 5">
    <original>E</original>
    <variation>A</variation>
    <location>
        <position position="92"/>
    </location>
</feature>
<feature type="sequence variant" id="VAR_067468" description="In dbSNP:rs57068937.">
    <original>Y</original>
    <variation>H</variation>
    <location>
        <position position="170"/>
    </location>
</feature>
<feature type="sequence conflict" description="In Ref. 5; AAH21180." evidence="6" ref="5">
    <original>N</original>
    <variation>S</variation>
    <location>
        <position position="33"/>
    </location>
</feature>
<organism>
    <name type="scientific">Homo sapiens</name>
    <name type="common">Human</name>
    <dbReference type="NCBI Taxonomy" id="9606"/>
    <lineage>
        <taxon>Eukaryota</taxon>
        <taxon>Metazoa</taxon>
        <taxon>Chordata</taxon>
        <taxon>Craniata</taxon>
        <taxon>Vertebrata</taxon>
        <taxon>Euteleostomi</taxon>
        <taxon>Mammalia</taxon>
        <taxon>Eutheria</taxon>
        <taxon>Euarchontoglires</taxon>
        <taxon>Primates</taxon>
        <taxon>Haplorrhini</taxon>
        <taxon>Catarrhini</taxon>
        <taxon>Hominidae</taxon>
        <taxon>Homo</taxon>
    </lineage>
</organism>
<comment type="interaction">
    <interactant intactId="EBI-10277297">
        <id>Q8WW32</id>
    </interactant>
    <interactant intactId="EBI-739624">
        <id>Q8NHQ1</id>
        <label>CEP70</label>
    </interactant>
    <organismsDiffer>false</organismsDiffer>
    <experiments>6</experiments>
</comment>
<comment type="interaction">
    <interactant intactId="EBI-10277297">
        <id>Q8WW32</id>
    </interactant>
    <interactant intactId="EBI-10176396">
        <id>P60329</id>
        <label>KRTAP12-4</label>
    </interactant>
    <organismsDiffer>false</organismsDiffer>
    <experiments>3</experiments>
</comment>
<comment type="subcellular location">
    <subcellularLocation>
        <location evidence="1">Nucleus</location>
    </subcellularLocation>
    <subcellularLocation>
        <location evidence="1">Chromosome</location>
    </subcellularLocation>
    <text evidence="1">Interacts specifically with the sex chromosomes.</text>
</comment>
<comment type="similarity">
    <text evidence="6">Belongs to the HMGB family.</text>
</comment>
<proteinExistence type="evidence at protein level"/>